<keyword id="KW-1003">Cell membrane</keyword>
<keyword id="KW-0406">Ion transport</keyword>
<keyword id="KW-0472">Membrane</keyword>
<keyword id="KW-1185">Reference proteome</keyword>
<keyword id="KW-0732">Signal</keyword>
<keyword id="KW-0812">Transmembrane</keyword>
<keyword id="KW-1133">Transmembrane helix</keyword>
<keyword id="KW-0813">Transport</keyword>
<keyword id="KW-0862">Zinc</keyword>
<keyword id="KW-0864">Zinc transport</keyword>
<gene>
    <name type="primary">ZIP8</name>
    <name type="ordered locus">At5g45105</name>
    <name type="ORF">K17O22.10</name>
</gene>
<sequence>MATTTQHMNQIFLVLLLISFAISPAISTVPKECETDSTDSCIDKTKALPLKIVAIVAILVTSMIGVAAPLFSRYVTFLHPDGKIFMIIKCFASGIILGTGFMHVLPDSFEMLSSPCLEDNPWHKFPFTGFVAMLSGLVTLAIDSIATSLYTKKAVADDSEERTTPMIIQIDHLPLTTKERSSTCSKQLLRYRVIATVLELGIIVHSVVIGLSLGATNDTCTIKGLIAALCFHQMFEGMGLGGCILQAEYTNVKKFVMAFFFAVTTPSGIALGIALSSVYKDNSPTALITVGLLNACSAGLLIYMALVDLLAAEFMGSMLQRSVKLQLNCFGAALLGCGGMSVLAKWA</sequence>
<feature type="signal peptide" evidence="2">
    <location>
        <begin position="1"/>
        <end position="27"/>
    </location>
</feature>
<feature type="chain" id="PRO_0000041646" description="Probable zinc transporter 8">
    <location>
        <begin position="28"/>
        <end position="347"/>
    </location>
</feature>
<feature type="topological domain" description="Extracellular" evidence="2">
    <location>
        <begin position="28"/>
        <end position="51"/>
    </location>
</feature>
<feature type="transmembrane region" description="Helical" evidence="2">
    <location>
        <begin position="52"/>
        <end position="72"/>
    </location>
</feature>
<feature type="topological domain" description="Cytoplasmic" evidence="2">
    <location>
        <begin position="73"/>
        <end position="83"/>
    </location>
</feature>
<feature type="transmembrane region" description="Helical" evidence="2">
    <location>
        <begin position="84"/>
        <end position="104"/>
    </location>
</feature>
<feature type="topological domain" description="Extracellular" evidence="2">
    <location>
        <begin position="105"/>
        <end position="124"/>
    </location>
</feature>
<feature type="transmembrane region" description="Helical" evidence="2">
    <location>
        <begin position="125"/>
        <end position="145"/>
    </location>
</feature>
<feature type="topological domain" description="Cytoplasmic" evidence="2">
    <location>
        <begin position="146"/>
        <end position="192"/>
    </location>
</feature>
<feature type="transmembrane region" description="Helical" evidence="2">
    <location>
        <begin position="193"/>
        <end position="213"/>
    </location>
</feature>
<feature type="topological domain" description="Extracellular" evidence="2">
    <location>
        <begin position="214"/>
        <end position="224"/>
    </location>
</feature>
<feature type="transmembrane region" description="Helical" evidence="2">
    <location>
        <begin position="225"/>
        <end position="245"/>
    </location>
</feature>
<feature type="topological domain" description="Cytoplasmic" evidence="2">
    <location>
        <begin position="246"/>
        <end position="254"/>
    </location>
</feature>
<feature type="transmembrane region" description="Helical" evidence="2">
    <location>
        <begin position="255"/>
        <end position="275"/>
    </location>
</feature>
<feature type="topological domain" description="Extracellular" evidence="2">
    <location>
        <begin position="276"/>
        <end position="286"/>
    </location>
</feature>
<feature type="transmembrane region" description="Helical" evidence="2">
    <location>
        <begin position="287"/>
        <end position="307"/>
    </location>
</feature>
<feature type="topological domain" description="Cytoplasmic" evidence="2">
    <location>
        <begin position="308"/>
        <end position="326"/>
    </location>
</feature>
<feature type="transmembrane region" description="Helical" evidence="2">
    <location>
        <begin position="327"/>
        <end position="347"/>
    </location>
</feature>
<dbReference type="EMBL" id="AF475143">
    <property type="protein sequence ID" value="AAL83293.1"/>
    <property type="molecule type" value="Genomic_DNA"/>
</dbReference>
<dbReference type="EMBL" id="AB019224">
    <property type="status" value="NOT_ANNOTATED_CDS"/>
    <property type="molecule type" value="Genomic_DNA"/>
</dbReference>
<dbReference type="EMBL" id="CP002688">
    <property type="protein sequence ID" value="AED95203.1"/>
    <property type="status" value="ALT_SEQ"/>
    <property type="molecule type" value="Genomic_DNA"/>
</dbReference>
<dbReference type="SMR" id="Q8S3W4"/>
<dbReference type="FunCoup" id="Q8S3W4">
    <property type="interactions" value="2584"/>
</dbReference>
<dbReference type="STRING" id="3702.Q8S3W4"/>
<dbReference type="Araport" id="AT5G45105"/>
<dbReference type="TAIR" id="AT5G45105"/>
<dbReference type="InParanoid" id="Q8S3W4"/>
<dbReference type="PhylomeDB" id="Q8S3W4"/>
<dbReference type="PRO" id="PR:Q8S3W4"/>
<dbReference type="Proteomes" id="UP000006548">
    <property type="component" value="Chromosome 5"/>
</dbReference>
<dbReference type="ExpressionAtlas" id="Q8S3W4">
    <property type="expression patterns" value="baseline and differential"/>
</dbReference>
<dbReference type="GO" id="GO:0005886">
    <property type="term" value="C:plasma membrane"/>
    <property type="evidence" value="ECO:0000318"/>
    <property type="project" value="GO_Central"/>
</dbReference>
<dbReference type="GO" id="GO:0005385">
    <property type="term" value="F:zinc ion transmembrane transporter activity"/>
    <property type="evidence" value="ECO:0000318"/>
    <property type="project" value="GO_Central"/>
</dbReference>
<dbReference type="GO" id="GO:0071577">
    <property type="term" value="P:zinc ion transmembrane transport"/>
    <property type="evidence" value="ECO:0000318"/>
    <property type="project" value="GO_Central"/>
</dbReference>
<dbReference type="InterPro" id="IPR003689">
    <property type="entry name" value="ZIP"/>
</dbReference>
<dbReference type="InterPro" id="IPR004698">
    <property type="entry name" value="Zn/Fe_permease_fun/pln"/>
</dbReference>
<dbReference type="NCBIfam" id="TIGR00820">
    <property type="entry name" value="zip"/>
    <property type="match status" value="1"/>
</dbReference>
<dbReference type="PANTHER" id="PTHR11040:SF180">
    <property type="entry name" value="ZINC TRANSPORTER 8-RELATED"/>
    <property type="match status" value="1"/>
</dbReference>
<dbReference type="PANTHER" id="PTHR11040">
    <property type="entry name" value="ZINC/IRON TRANSPORTER"/>
    <property type="match status" value="1"/>
</dbReference>
<dbReference type="Pfam" id="PF02535">
    <property type="entry name" value="Zip"/>
    <property type="match status" value="1"/>
</dbReference>
<proteinExistence type="inferred from homology"/>
<evidence type="ECO:0000250" key="1"/>
<evidence type="ECO:0000255" key="2"/>
<evidence type="ECO:0000305" key="3"/>
<reference key="1">
    <citation type="journal article" date="2001" name="Plant Physiol.">
        <title>Phylogenetic relationships within cation transporter families of Arabidopsis.</title>
        <authorList>
            <person name="Maeser P."/>
            <person name="Thomine S."/>
            <person name="Schroeder J.I."/>
            <person name="Ward J.M."/>
            <person name="Hirschi K."/>
            <person name="Sze H."/>
            <person name="Talke I.N."/>
            <person name="Amtmann A."/>
            <person name="Maathuis F.J.M."/>
            <person name="Sanders D."/>
            <person name="Harper J.F."/>
            <person name="Tchieu J."/>
            <person name="Gribskov M."/>
            <person name="Persans M.W."/>
            <person name="Salt D.E."/>
            <person name="Kim S.A."/>
            <person name="Guerinot M.L."/>
        </authorList>
    </citation>
    <scope>NUCLEOTIDE SEQUENCE [GENOMIC DNA]</scope>
</reference>
<reference key="2">
    <citation type="journal article" date="2000" name="DNA Res.">
        <title>Structural analysis of Arabidopsis thaliana chromosome 5. X. Sequence features of the regions of 3,076,755 bp covered by sixty P1 and TAC clones.</title>
        <authorList>
            <person name="Sato S."/>
            <person name="Nakamura Y."/>
            <person name="Kaneko T."/>
            <person name="Katoh T."/>
            <person name="Asamizu E."/>
            <person name="Kotani H."/>
            <person name="Tabata S."/>
        </authorList>
    </citation>
    <scope>NUCLEOTIDE SEQUENCE [LARGE SCALE GENOMIC DNA]</scope>
    <source>
        <strain>cv. Columbia</strain>
    </source>
</reference>
<reference key="3">
    <citation type="journal article" date="2017" name="Plant J.">
        <title>Araport11: a complete reannotation of the Arabidopsis thaliana reference genome.</title>
        <authorList>
            <person name="Cheng C.Y."/>
            <person name="Krishnakumar V."/>
            <person name="Chan A.P."/>
            <person name="Thibaud-Nissen F."/>
            <person name="Schobel S."/>
            <person name="Town C.D."/>
        </authorList>
    </citation>
    <scope>GENOME REANNOTATION</scope>
    <source>
        <strain>cv. Columbia</strain>
    </source>
</reference>
<name>ZIP8_ARATH</name>
<comment type="function">
    <text evidence="1">Probably mediates zinc uptake from the rhizosphere.</text>
</comment>
<comment type="subcellular location">
    <subcellularLocation>
        <location evidence="3">Cell membrane</location>
        <topology evidence="3">Multi-pass membrane protein</topology>
    </subcellularLocation>
</comment>
<comment type="similarity">
    <text evidence="3">Belongs to the ZIP transporter (TC 2.A.5) family.</text>
</comment>
<comment type="sequence caution" evidence="3">
    <conflict type="erroneous termination">
        <sequence resource="EMBL" id="AB019224"/>
    </conflict>
    <text>Truncated C-terminus.</text>
</comment>
<comment type="sequence caution" evidence="3">
    <conflict type="erroneous gene model prediction">
        <sequence resource="EMBL-CDS" id="AED95203"/>
    </conflict>
</comment>
<organism>
    <name type="scientific">Arabidopsis thaliana</name>
    <name type="common">Mouse-ear cress</name>
    <dbReference type="NCBI Taxonomy" id="3702"/>
    <lineage>
        <taxon>Eukaryota</taxon>
        <taxon>Viridiplantae</taxon>
        <taxon>Streptophyta</taxon>
        <taxon>Embryophyta</taxon>
        <taxon>Tracheophyta</taxon>
        <taxon>Spermatophyta</taxon>
        <taxon>Magnoliopsida</taxon>
        <taxon>eudicotyledons</taxon>
        <taxon>Gunneridae</taxon>
        <taxon>Pentapetalae</taxon>
        <taxon>rosids</taxon>
        <taxon>malvids</taxon>
        <taxon>Brassicales</taxon>
        <taxon>Brassicaceae</taxon>
        <taxon>Camelineae</taxon>
        <taxon>Arabidopsis</taxon>
    </lineage>
</organism>
<accession>Q8S3W4</accession>
<accession>F4KD33</accession>
<protein>
    <recommendedName>
        <fullName>Probable zinc transporter 8</fullName>
    </recommendedName>
    <alternativeName>
        <fullName>ZRT/IRT-like protein 8</fullName>
    </alternativeName>
</protein>